<accession>Q1CRT7</accession>
<gene>
    <name evidence="1" type="primary">rnhB</name>
    <name type="ordered locus">HPAG1_1268</name>
</gene>
<protein>
    <recommendedName>
        <fullName evidence="1">Ribonuclease HII</fullName>
        <shortName evidence="1">RNase HII</shortName>
        <ecNumber evidence="1">3.1.26.4</ecNumber>
    </recommendedName>
</protein>
<reference key="1">
    <citation type="journal article" date="2006" name="Proc. Natl. Acad. Sci. U.S.A.">
        <title>The complete genome sequence of a chronic atrophic gastritis Helicobacter pylori strain: evolution during disease progression.</title>
        <authorList>
            <person name="Oh J.D."/>
            <person name="Kling-Baeckhed H."/>
            <person name="Giannakis M."/>
            <person name="Xu J."/>
            <person name="Fulton R.S."/>
            <person name="Fulton L.A."/>
            <person name="Cordum H.S."/>
            <person name="Wang C."/>
            <person name="Elliott G."/>
            <person name="Edwards J."/>
            <person name="Mardis E.R."/>
            <person name="Engstrand L.G."/>
            <person name="Gordon J.I."/>
        </authorList>
    </citation>
    <scope>NUCLEOTIDE SEQUENCE [LARGE SCALE GENOMIC DNA]</scope>
    <source>
        <strain>HPAG1</strain>
    </source>
</reference>
<sequence length="204" mass="22468">MTLGIDEAGRGCLAGSLFVAGVACSEKTALEFLKMGLKDSKKLSQKKRFFLEDKIKTHGEVGFFVVKKSAEAIDSLGLGACLKLAIEEILENGCSLANEIKIDGNTAFGLNKRYPNIQTIIKGDETIAQIAMASVLAKAAKDREMLELHALFKEYGWDKNCGYGTKQHIEAIIKLGATPFHRHSFTLKNRILNPKLLEVEQRLV</sequence>
<dbReference type="EC" id="3.1.26.4" evidence="1"/>
<dbReference type="EMBL" id="CP000241">
    <property type="protein sequence ID" value="ABF85335.1"/>
    <property type="molecule type" value="Genomic_DNA"/>
</dbReference>
<dbReference type="RefSeq" id="WP_000172126.1">
    <property type="nucleotide sequence ID" value="NC_008086.1"/>
</dbReference>
<dbReference type="SMR" id="Q1CRT7"/>
<dbReference type="KEGG" id="hpa:HPAG1_1268"/>
<dbReference type="HOGENOM" id="CLU_036532_3_1_7"/>
<dbReference type="GO" id="GO:0005737">
    <property type="term" value="C:cytoplasm"/>
    <property type="evidence" value="ECO:0007669"/>
    <property type="project" value="UniProtKB-SubCell"/>
</dbReference>
<dbReference type="GO" id="GO:0032299">
    <property type="term" value="C:ribonuclease H2 complex"/>
    <property type="evidence" value="ECO:0007669"/>
    <property type="project" value="TreeGrafter"/>
</dbReference>
<dbReference type="GO" id="GO:0030145">
    <property type="term" value="F:manganese ion binding"/>
    <property type="evidence" value="ECO:0007669"/>
    <property type="project" value="UniProtKB-UniRule"/>
</dbReference>
<dbReference type="GO" id="GO:0003723">
    <property type="term" value="F:RNA binding"/>
    <property type="evidence" value="ECO:0007669"/>
    <property type="project" value="InterPro"/>
</dbReference>
<dbReference type="GO" id="GO:0004523">
    <property type="term" value="F:RNA-DNA hybrid ribonuclease activity"/>
    <property type="evidence" value="ECO:0007669"/>
    <property type="project" value="UniProtKB-UniRule"/>
</dbReference>
<dbReference type="GO" id="GO:0043137">
    <property type="term" value="P:DNA replication, removal of RNA primer"/>
    <property type="evidence" value="ECO:0007669"/>
    <property type="project" value="TreeGrafter"/>
</dbReference>
<dbReference type="GO" id="GO:0006298">
    <property type="term" value="P:mismatch repair"/>
    <property type="evidence" value="ECO:0007669"/>
    <property type="project" value="TreeGrafter"/>
</dbReference>
<dbReference type="CDD" id="cd07182">
    <property type="entry name" value="RNase_HII_bacteria_HII_like"/>
    <property type="match status" value="1"/>
</dbReference>
<dbReference type="Gene3D" id="3.30.420.10">
    <property type="entry name" value="Ribonuclease H-like superfamily/Ribonuclease H"/>
    <property type="match status" value="1"/>
</dbReference>
<dbReference type="HAMAP" id="MF_00052_B">
    <property type="entry name" value="RNase_HII_B"/>
    <property type="match status" value="1"/>
</dbReference>
<dbReference type="InterPro" id="IPR022898">
    <property type="entry name" value="RNase_HII"/>
</dbReference>
<dbReference type="InterPro" id="IPR001352">
    <property type="entry name" value="RNase_HII/HIII"/>
</dbReference>
<dbReference type="InterPro" id="IPR024567">
    <property type="entry name" value="RNase_HII/HIII_dom"/>
</dbReference>
<dbReference type="InterPro" id="IPR012337">
    <property type="entry name" value="RNaseH-like_sf"/>
</dbReference>
<dbReference type="InterPro" id="IPR036397">
    <property type="entry name" value="RNaseH_sf"/>
</dbReference>
<dbReference type="NCBIfam" id="NF000595">
    <property type="entry name" value="PRK00015.1-3"/>
    <property type="match status" value="1"/>
</dbReference>
<dbReference type="NCBIfam" id="NF011119">
    <property type="entry name" value="PRK14550.1"/>
    <property type="match status" value="1"/>
</dbReference>
<dbReference type="PANTHER" id="PTHR10954">
    <property type="entry name" value="RIBONUCLEASE H2 SUBUNIT A"/>
    <property type="match status" value="1"/>
</dbReference>
<dbReference type="PANTHER" id="PTHR10954:SF18">
    <property type="entry name" value="RIBONUCLEASE HII"/>
    <property type="match status" value="1"/>
</dbReference>
<dbReference type="Pfam" id="PF01351">
    <property type="entry name" value="RNase_HII"/>
    <property type="match status" value="1"/>
</dbReference>
<dbReference type="SUPFAM" id="SSF53098">
    <property type="entry name" value="Ribonuclease H-like"/>
    <property type="match status" value="1"/>
</dbReference>
<dbReference type="PROSITE" id="PS51975">
    <property type="entry name" value="RNASE_H_2"/>
    <property type="match status" value="1"/>
</dbReference>
<evidence type="ECO:0000255" key="1">
    <source>
        <dbReference type="HAMAP-Rule" id="MF_00052"/>
    </source>
</evidence>
<evidence type="ECO:0000255" key="2">
    <source>
        <dbReference type="PROSITE-ProRule" id="PRU01319"/>
    </source>
</evidence>
<organism>
    <name type="scientific">Helicobacter pylori (strain HPAG1)</name>
    <dbReference type="NCBI Taxonomy" id="357544"/>
    <lineage>
        <taxon>Bacteria</taxon>
        <taxon>Pseudomonadati</taxon>
        <taxon>Campylobacterota</taxon>
        <taxon>Epsilonproteobacteria</taxon>
        <taxon>Campylobacterales</taxon>
        <taxon>Helicobacteraceae</taxon>
        <taxon>Helicobacter</taxon>
    </lineage>
</organism>
<feature type="chain" id="PRO_0000334905" description="Ribonuclease HII">
    <location>
        <begin position="1"/>
        <end position="204"/>
    </location>
</feature>
<feature type="domain" description="RNase H type-2" evidence="2">
    <location>
        <begin position="1"/>
        <end position="197"/>
    </location>
</feature>
<feature type="binding site" evidence="1">
    <location>
        <position position="6"/>
    </location>
    <ligand>
        <name>a divalent metal cation</name>
        <dbReference type="ChEBI" id="CHEBI:60240"/>
    </ligand>
</feature>
<feature type="binding site" evidence="1">
    <location>
        <position position="7"/>
    </location>
    <ligand>
        <name>a divalent metal cation</name>
        <dbReference type="ChEBI" id="CHEBI:60240"/>
    </ligand>
</feature>
<feature type="binding site" evidence="1">
    <location>
        <position position="103"/>
    </location>
    <ligand>
        <name>a divalent metal cation</name>
        <dbReference type="ChEBI" id="CHEBI:60240"/>
    </ligand>
</feature>
<name>RNH2_HELPH</name>
<proteinExistence type="inferred from homology"/>
<comment type="function">
    <text evidence="1">Endonuclease that specifically degrades the RNA of RNA-DNA hybrids.</text>
</comment>
<comment type="catalytic activity">
    <reaction evidence="1">
        <text>Endonucleolytic cleavage to 5'-phosphomonoester.</text>
        <dbReference type="EC" id="3.1.26.4"/>
    </reaction>
</comment>
<comment type="cofactor">
    <cofactor evidence="1">
        <name>Mn(2+)</name>
        <dbReference type="ChEBI" id="CHEBI:29035"/>
    </cofactor>
    <cofactor evidence="1">
        <name>Mg(2+)</name>
        <dbReference type="ChEBI" id="CHEBI:18420"/>
    </cofactor>
    <text evidence="1">Manganese or magnesium. Binds 1 divalent metal ion per monomer in the absence of substrate. May bind a second metal ion after substrate binding.</text>
</comment>
<comment type="subcellular location">
    <subcellularLocation>
        <location evidence="1">Cytoplasm</location>
    </subcellularLocation>
</comment>
<comment type="similarity">
    <text evidence="1">Belongs to the RNase HII family.</text>
</comment>
<keyword id="KW-0963">Cytoplasm</keyword>
<keyword id="KW-0255">Endonuclease</keyword>
<keyword id="KW-0378">Hydrolase</keyword>
<keyword id="KW-0464">Manganese</keyword>
<keyword id="KW-0479">Metal-binding</keyword>
<keyword id="KW-0540">Nuclease</keyword>